<reference key="1">
    <citation type="submission" date="2005-06" db="EMBL/GenBank/DDBJ databases">
        <title>DNA sequences of macaque genes expressed in brain or testis and its evolutionary implications.</title>
        <authorList>
            <consortium name="International consortium for macaque cDNA sequencing and analysis"/>
        </authorList>
    </citation>
    <scope>NUCLEOTIDE SEQUENCE [LARGE SCALE MRNA]</scope>
    <source>
        <tissue>Testis</tissue>
    </source>
</reference>
<dbReference type="EMBL" id="AB168990">
    <property type="protein sequence ID" value="BAE01085.1"/>
    <property type="molecule type" value="mRNA"/>
</dbReference>
<dbReference type="RefSeq" id="NP_001270649.1">
    <property type="nucleotide sequence ID" value="NM_001283720.1"/>
</dbReference>
<dbReference type="SMR" id="Q4R739"/>
<dbReference type="STRING" id="9541.ENSMFAP00000016058"/>
<dbReference type="Ensembl" id="ENSMFAT00000066588.2">
    <property type="protein sequence ID" value="ENSMFAP00000016058.2"/>
    <property type="gene ID" value="ENSMFAG00000031224.2"/>
</dbReference>
<dbReference type="eggNOG" id="KOG4177">
    <property type="taxonomic scope" value="Eukaryota"/>
</dbReference>
<dbReference type="GeneTree" id="ENSGT00390000005650"/>
<dbReference type="Proteomes" id="UP000233100">
    <property type="component" value="Chromosome 13"/>
</dbReference>
<dbReference type="Bgee" id="ENSMFAG00000031224">
    <property type="expression patterns" value="Expressed in multicellular organism"/>
</dbReference>
<dbReference type="GO" id="GO:0005737">
    <property type="term" value="C:cytoplasm"/>
    <property type="evidence" value="ECO:0007669"/>
    <property type="project" value="UniProtKB-KW"/>
</dbReference>
<dbReference type="GO" id="GO:0005819">
    <property type="term" value="C:spindle"/>
    <property type="evidence" value="ECO:0000250"/>
    <property type="project" value="UniProtKB"/>
</dbReference>
<dbReference type="GO" id="GO:0000922">
    <property type="term" value="C:spindle pole"/>
    <property type="evidence" value="ECO:0000250"/>
    <property type="project" value="UniProtKB"/>
</dbReference>
<dbReference type="GO" id="GO:0051301">
    <property type="term" value="P:cell division"/>
    <property type="evidence" value="ECO:0007669"/>
    <property type="project" value="UniProtKB-KW"/>
</dbReference>
<dbReference type="GO" id="GO:0007080">
    <property type="term" value="P:mitotic metaphase chromosome alignment"/>
    <property type="evidence" value="ECO:0000250"/>
    <property type="project" value="UniProtKB"/>
</dbReference>
<dbReference type="GO" id="GO:0031116">
    <property type="term" value="P:positive regulation of microtubule polymerization"/>
    <property type="evidence" value="ECO:0000250"/>
    <property type="project" value="UniProtKB"/>
</dbReference>
<dbReference type="GO" id="GO:1902412">
    <property type="term" value="P:regulation of mitotic cytokinesis"/>
    <property type="evidence" value="ECO:0000250"/>
    <property type="project" value="UniProtKB"/>
</dbReference>
<dbReference type="GO" id="GO:0060236">
    <property type="term" value="P:regulation of mitotic spindle organization"/>
    <property type="evidence" value="ECO:0000250"/>
    <property type="project" value="UniProtKB"/>
</dbReference>
<dbReference type="FunFam" id="1.25.40.20:FF:000324">
    <property type="entry name" value="Ankyrin repeat domain 53"/>
    <property type="match status" value="1"/>
</dbReference>
<dbReference type="Gene3D" id="1.25.40.20">
    <property type="entry name" value="Ankyrin repeat-containing domain"/>
    <property type="match status" value="1"/>
</dbReference>
<dbReference type="InterPro" id="IPR042335">
    <property type="entry name" value="ANKRD53"/>
</dbReference>
<dbReference type="InterPro" id="IPR002110">
    <property type="entry name" value="Ankyrin_rpt"/>
</dbReference>
<dbReference type="InterPro" id="IPR036770">
    <property type="entry name" value="Ankyrin_rpt-contain_sf"/>
</dbReference>
<dbReference type="PANTHER" id="PTHR24160">
    <property type="entry name" value="ANKYRIN REPEAT DOMAIN-CONTAINING PROTEIN 53"/>
    <property type="match status" value="1"/>
</dbReference>
<dbReference type="PANTHER" id="PTHR24160:SF1">
    <property type="entry name" value="ANKYRIN REPEAT DOMAIN-CONTAINING PROTEIN 53"/>
    <property type="match status" value="1"/>
</dbReference>
<dbReference type="Pfam" id="PF12796">
    <property type="entry name" value="Ank_2"/>
    <property type="match status" value="1"/>
</dbReference>
<dbReference type="PRINTS" id="PR01415">
    <property type="entry name" value="ANKYRIN"/>
</dbReference>
<dbReference type="SMART" id="SM00248">
    <property type="entry name" value="ANK"/>
    <property type="match status" value="3"/>
</dbReference>
<dbReference type="SUPFAM" id="SSF48403">
    <property type="entry name" value="Ankyrin repeat"/>
    <property type="match status" value="1"/>
</dbReference>
<dbReference type="PROSITE" id="PS50297">
    <property type="entry name" value="ANK_REP_REGION"/>
    <property type="match status" value="1"/>
</dbReference>
<dbReference type="PROSITE" id="PS50088">
    <property type="entry name" value="ANK_REPEAT"/>
    <property type="match status" value="2"/>
</dbReference>
<name>ANR53_MACFA</name>
<keyword id="KW-0040">ANK repeat</keyword>
<keyword id="KW-0131">Cell cycle</keyword>
<keyword id="KW-0132">Cell division</keyword>
<keyword id="KW-0963">Cytoplasm</keyword>
<keyword id="KW-0206">Cytoskeleton</keyword>
<keyword id="KW-0498">Mitosis</keyword>
<keyword id="KW-0597">Phosphoprotein</keyword>
<keyword id="KW-1185">Reference proteome</keyword>
<keyword id="KW-0677">Repeat</keyword>
<evidence type="ECO:0000250" key="1">
    <source>
        <dbReference type="UniProtKB" id="Q8N9V6"/>
    </source>
</evidence>
<evidence type="ECO:0000256" key="2">
    <source>
        <dbReference type="SAM" id="MobiDB-lite"/>
    </source>
</evidence>
<proteinExistence type="evidence at transcript level"/>
<protein>
    <recommendedName>
        <fullName>Ankyrin repeat domain-containing protein 53</fullName>
    </recommendedName>
</protein>
<accession>Q4R739</accession>
<comment type="function">
    <text evidence="1">Required for normal progression through mitosis. Involved in chromosome alignment and cytokinesis via regulation of microtubules polymerization.</text>
</comment>
<comment type="subunit">
    <text evidence="1">Interacts with PSRC1; recruited by PSRC1 to the spindle during mitosis.</text>
</comment>
<comment type="subcellular location">
    <subcellularLocation>
        <location evidence="1">Cytoplasm</location>
        <location evidence="1">Cytoskeleton</location>
        <location evidence="1">Spindle</location>
    </subcellularLocation>
    <subcellularLocation>
        <location evidence="1">Cytoplasm</location>
        <location evidence="1">Cytoskeleton</location>
        <location evidence="1">Spindle pole</location>
    </subcellularLocation>
    <text evidence="1">Localizes at the spindle around the centrosome at prophase and prometaphase and at the spindle poles at metaphase and anaphase.</text>
</comment>
<comment type="PTM">
    <text evidence="1">Phosphorylated during mitosis.</text>
</comment>
<sequence length="496" mass="56088">MASAGSTARRAGSGSWHSERGEGRGARPQPTPHGSMQRANKVSLKATWTDAESKQPRPSEESDQTTIDQTAIRSYYQLFAAAVGNVEWLRFCLNQSLREIPTDYKGFTAIHFAAQRGKLACLQVLVEEYKFPVNLLTNNSQTPLHLVIHKDNTTVALPCIYYLLEKGAALNAQTCNGCTPLHLAVREGLLDCVKVLVQSGANVHAQDAMGYKPIDFCKIWNHRACARFLKDAMWKKDKKDFACEMRKMKTLKSQLALMEYNYLIEYQKEHKILREAAIRKWLHGKLHPGHSLVSNTKQARATALSKTPEQRGSQCSSSFHPSVEARLQCIPQPTEMPKPIYRKSTIKRPTMWNVSNNPARPPTTKISHSQGIRLGVHPDPSPEHDFSSFLEVRPDRHGGAWLHTVDGHWVAPVPRLPFEVLLRMLYPHVRPYRMKVPQGFYPISMREVPRKRHLGDDTFWTDTLAMNLRDTFDEAFLAAVRSHQGLPALPSPQINP</sequence>
<gene>
    <name type="primary">ANKRD53</name>
    <name type="ORF">QtsA-16406</name>
</gene>
<feature type="chain" id="PRO_0000274491" description="Ankyrin repeat domain-containing protein 53">
    <location>
        <begin position="1"/>
        <end position="496"/>
    </location>
</feature>
<feature type="repeat" description="ANK 1">
    <location>
        <begin position="105"/>
        <end position="135"/>
    </location>
</feature>
<feature type="repeat" description="ANK 2">
    <location>
        <begin position="139"/>
        <end position="172"/>
    </location>
</feature>
<feature type="repeat" description="ANK 3">
    <location>
        <begin position="176"/>
        <end position="205"/>
    </location>
</feature>
<feature type="region of interest" description="Disordered" evidence="2">
    <location>
        <begin position="1"/>
        <end position="66"/>
    </location>
</feature>
<feature type="region of interest" description="Disordered" evidence="2">
    <location>
        <begin position="292"/>
        <end position="320"/>
    </location>
</feature>
<feature type="compositionally biased region" description="Low complexity" evidence="2">
    <location>
        <begin position="1"/>
        <end position="15"/>
    </location>
</feature>
<feature type="compositionally biased region" description="Basic and acidic residues" evidence="2">
    <location>
        <begin position="51"/>
        <end position="60"/>
    </location>
</feature>
<organism>
    <name type="scientific">Macaca fascicularis</name>
    <name type="common">Crab-eating macaque</name>
    <name type="synonym">Cynomolgus monkey</name>
    <dbReference type="NCBI Taxonomy" id="9541"/>
    <lineage>
        <taxon>Eukaryota</taxon>
        <taxon>Metazoa</taxon>
        <taxon>Chordata</taxon>
        <taxon>Craniata</taxon>
        <taxon>Vertebrata</taxon>
        <taxon>Euteleostomi</taxon>
        <taxon>Mammalia</taxon>
        <taxon>Eutheria</taxon>
        <taxon>Euarchontoglires</taxon>
        <taxon>Primates</taxon>
        <taxon>Haplorrhini</taxon>
        <taxon>Catarrhini</taxon>
        <taxon>Cercopithecidae</taxon>
        <taxon>Cercopithecinae</taxon>
        <taxon>Macaca</taxon>
    </lineage>
</organism>